<feature type="chain" id="PRO_1000067682" description="Large ribosomal subunit protein uL16">
    <location>
        <begin position="1"/>
        <end position="142"/>
    </location>
</feature>
<dbReference type="EMBL" id="CP000812">
    <property type="protein sequence ID" value="ABV33152.1"/>
    <property type="molecule type" value="Genomic_DNA"/>
</dbReference>
<dbReference type="RefSeq" id="WP_012002633.1">
    <property type="nucleotide sequence ID" value="NZ_BSDV01000001.1"/>
</dbReference>
<dbReference type="SMR" id="A8F4R8"/>
<dbReference type="STRING" id="416591.Tlet_0586"/>
<dbReference type="KEGG" id="tle:Tlet_0586"/>
<dbReference type="eggNOG" id="COG0197">
    <property type="taxonomic scope" value="Bacteria"/>
</dbReference>
<dbReference type="HOGENOM" id="CLU_078858_2_1_0"/>
<dbReference type="OrthoDB" id="9802589at2"/>
<dbReference type="Proteomes" id="UP000002016">
    <property type="component" value="Chromosome"/>
</dbReference>
<dbReference type="GO" id="GO:0022625">
    <property type="term" value="C:cytosolic large ribosomal subunit"/>
    <property type="evidence" value="ECO:0007669"/>
    <property type="project" value="TreeGrafter"/>
</dbReference>
<dbReference type="GO" id="GO:0019843">
    <property type="term" value="F:rRNA binding"/>
    <property type="evidence" value="ECO:0007669"/>
    <property type="project" value="UniProtKB-UniRule"/>
</dbReference>
<dbReference type="GO" id="GO:0003735">
    <property type="term" value="F:structural constituent of ribosome"/>
    <property type="evidence" value="ECO:0007669"/>
    <property type="project" value="InterPro"/>
</dbReference>
<dbReference type="GO" id="GO:0000049">
    <property type="term" value="F:tRNA binding"/>
    <property type="evidence" value="ECO:0007669"/>
    <property type="project" value="UniProtKB-KW"/>
</dbReference>
<dbReference type="GO" id="GO:0006412">
    <property type="term" value="P:translation"/>
    <property type="evidence" value="ECO:0007669"/>
    <property type="project" value="UniProtKB-UniRule"/>
</dbReference>
<dbReference type="CDD" id="cd01433">
    <property type="entry name" value="Ribosomal_L16_L10e"/>
    <property type="match status" value="1"/>
</dbReference>
<dbReference type="FunFam" id="3.90.1170.10:FF:000001">
    <property type="entry name" value="50S ribosomal protein L16"/>
    <property type="match status" value="1"/>
</dbReference>
<dbReference type="Gene3D" id="3.90.1170.10">
    <property type="entry name" value="Ribosomal protein L10e/L16"/>
    <property type="match status" value="1"/>
</dbReference>
<dbReference type="HAMAP" id="MF_01342">
    <property type="entry name" value="Ribosomal_uL16"/>
    <property type="match status" value="1"/>
</dbReference>
<dbReference type="InterPro" id="IPR047873">
    <property type="entry name" value="Ribosomal_uL16"/>
</dbReference>
<dbReference type="InterPro" id="IPR000114">
    <property type="entry name" value="Ribosomal_uL16_bact-type"/>
</dbReference>
<dbReference type="InterPro" id="IPR020798">
    <property type="entry name" value="Ribosomal_uL16_CS"/>
</dbReference>
<dbReference type="InterPro" id="IPR016180">
    <property type="entry name" value="Ribosomal_uL16_dom"/>
</dbReference>
<dbReference type="InterPro" id="IPR036920">
    <property type="entry name" value="Ribosomal_uL16_sf"/>
</dbReference>
<dbReference type="NCBIfam" id="TIGR01164">
    <property type="entry name" value="rplP_bact"/>
    <property type="match status" value="1"/>
</dbReference>
<dbReference type="PANTHER" id="PTHR12220">
    <property type="entry name" value="50S/60S RIBOSOMAL PROTEIN L16"/>
    <property type="match status" value="1"/>
</dbReference>
<dbReference type="PANTHER" id="PTHR12220:SF13">
    <property type="entry name" value="LARGE RIBOSOMAL SUBUNIT PROTEIN UL16M"/>
    <property type="match status" value="1"/>
</dbReference>
<dbReference type="Pfam" id="PF00252">
    <property type="entry name" value="Ribosomal_L16"/>
    <property type="match status" value="1"/>
</dbReference>
<dbReference type="PRINTS" id="PR00060">
    <property type="entry name" value="RIBOSOMALL16"/>
</dbReference>
<dbReference type="SUPFAM" id="SSF54686">
    <property type="entry name" value="Ribosomal protein L16p/L10e"/>
    <property type="match status" value="1"/>
</dbReference>
<dbReference type="PROSITE" id="PS00586">
    <property type="entry name" value="RIBOSOMAL_L16_1"/>
    <property type="match status" value="1"/>
</dbReference>
<name>RL16_PSELT</name>
<organism>
    <name type="scientific">Pseudothermotoga lettingae (strain ATCC BAA-301 / DSM 14385 / NBRC 107922 / TMO)</name>
    <name type="common">Thermotoga lettingae</name>
    <dbReference type="NCBI Taxonomy" id="416591"/>
    <lineage>
        <taxon>Bacteria</taxon>
        <taxon>Thermotogati</taxon>
        <taxon>Thermotogota</taxon>
        <taxon>Thermotogae</taxon>
        <taxon>Thermotogales</taxon>
        <taxon>Thermotogaceae</taxon>
        <taxon>Pseudothermotoga</taxon>
    </lineage>
</organism>
<accession>A8F4R8</accession>
<comment type="function">
    <text evidence="1">Binds 23S rRNA and is also seen to make contacts with the A and possibly P site tRNAs.</text>
</comment>
<comment type="subunit">
    <text evidence="1">Part of the 50S ribosomal subunit.</text>
</comment>
<comment type="similarity">
    <text evidence="1">Belongs to the universal ribosomal protein uL16 family.</text>
</comment>
<gene>
    <name evidence="1" type="primary">rplP</name>
    <name type="ordered locus">Tlet_0586</name>
</gene>
<sequence>MLMPKRVKYRKQQRGRMRGEAKGGTTVDFGEWGLKALAPAWITAQQIEAGRIAIMRVMKRSGKLWIRVFPDKPYTKKPAESRQGKGKGNVEGWVSVVKPGKIIFEIAGVDENTAKEALKYAASKFPIPTKIVSRSNIGGEAV</sequence>
<reference key="1">
    <citation type="submission" date="2007-08" db="EMBL/GenBank/DDBJ databases">
        <title>Complete sequence of Thermotoga lettingae TMO.</title>
        <authorList>
            <consortium name="US DOE Joint Genome Institute"/>
            <person name="Copeland A."/>
            <person name="Lucas S."/>
            <person name="Lapidus A."/>
            <person name="Barry K."/>
            <person name="Glavina del Rio T."/>
            <person name="Dalin E."/>
            <person name="Tice H."/>
            <person name="Pitluck S."/>
            <person name="Foster B."/>
            <person name="Bruce D."/>
            <person name="Schmutz J."/>
            <person name="Larimer F."/>
            <person name="Land M."/>
            <person name="Hauser L."/>
            <person name="Kyrpides N."/>
            <person name="Mikhailova N."/>
            <person name="Nelson K."/>
            <person name="Gogarten J.P."/>
            <person name="Noll K."/>
            <person name="Richardson P."/>
        </authorList>
    </citation>
    <scope>NUCLEOTIDE SEQUENCE [LARGE SCALE GENOMIC DNA]</scope>
    <source>
        <strain>ATCC BAA-301 / DSM 14385 / NBRC 107922 / TMO</strain>
    </source>
</reference>
<evidence type="ECO:0000255" key="1">
    <source>
        <dbReference type="HAMAP-Rule" id="MF_01342"/>
    </source>
</evidence>
<evidence type="ECO:0000305" key="2"/>
<proteinExistence type="inferred from homology"/>
<protein>
    <recommendedName>
        <fullName evidence="1">Large ribosomal subunit protein uL16</fullName>
    </recommendedName>
    <alternativeName>
        <fullName evidence="2">50S ribosomal protein L16</fullName>
    </alternativeName>
</protein>
<keyword id="KW-1185">Reference proteome</keyword>
<keyword id="KW-0687">Ribonucleoprotein</keyword>
<keyword id="KW-0689">Ribosomal protein</keyword>
<keyword id="KW-0694">RNA-binding</keyword>
<keyword id="KW-0699">rRNA-binding</keyword>
<keyword id="KW-0820">tRNA-binding</keyword>